<reference key="1">
    <citation type="journal article" date="1998" name="Mol. Vis.">
        <title>Congenital stationary night blindness in the dog: common mutation in the RPE65 gene indicates founder effect.</title>
        <authorList>
            <person name="Aguirre G.D."/>
            <person name="Baldwin V."/>
            <person name="Pearce-Kelling S."/>
            <person name="Narfstrom K."/>
            <person name="Ray K."/>
            <person name="Acland G.M."/>
        </authorList>
    </citation>
    <scope>NUCLEOTIDE SEQUENCE [MRNA]</scope>
</reference>
<reference key="2">
    <citation type="journal article" date="1999" name="Genomics">
        <title>Retinal dystrophy of Swedish briard/briard-beagle dogs is due to a 4-bp deletion in RPE65.</title>
        <authorList>
            <person name="Veske A."/>
            <person name="Nilsson S.E.G."/>
            <person name="Narfstrom K."/>
            <person name="Gal A."/>
        </authorList>
    </citation>
    <scope>NUCLEOTIDE SEQUENCE [MRNA]</scope>
    <source>
        <strain>Druttne N0606</strain>
        <tissue>Retinal pigment epithelium</tissue>
    </source>
</reference>
<reference key="3">
    <citation type="submission" date="2002-08" db="EMBL/GenBank/DDBJ databases">
        <title>Evaluation of the RPE65 gene as a candidate gene for generalised progressive retinal atrophy.</title>
        <authorList>
            <person name="Dekomien G."/>
            <person name="Epplen J.T."/>
        </authorList>
    </citation>
    <scope>NUCLEOTIDE SEQUENCE [GENOMIC DNA] OF 83-533</scope>
</reference>
<reference key="4">
    <citation type="journal article" date="2005" name="Proc. Natl. Acad. Sci. U.S.A.">
        <title>Mutation of key residues of RPE65 abolishes its enzymatic role as isomerohydrolase in the visual cycle.</title>
        <authorList>
            <person name="Redmond T.M."/>
            <person name="Poliakov E."/>
            <person name="Yu S."/>
            <person name="Tsai J.Y."/>
            <person name="Lu Z."/>
            <person name="Gentleman S."/>
        </authorList>
    </citation>
    <scope>COFACTOR</scope>
    <scope>MUTAGENESIS OF HIS-180; CYS-231; HIS-241; HIS-313; CYS-329; 329-CYS-CYS-330; CYS-330; GLU-417 AND HIS-527</scope>
    <scope>METAL-BINDING</scope>
    <scope>CATALYTIC ACTIVITY</scope>
</reference>
<reference key="5">
    <citation type="journal article" date="2019" name="Hum. Mutat.">
        <title>Aberrant RNA splicing is the major pathogenic effect in a knock-in mouse model of the dominantly inherited c.1430A&gt;G human RPE65 mutation.</title>
        <authorList>
            <person name="Li Y."/>
            <person name="Furhang R."/>
            <person name="Ray A."/>
            <person name="Duncan T."/>
            <person name="Soucy J."/>
            <person name="Mahdi R."/>
            <person name="Chaitankar V."/>
            <person name="Gieser L."/>
            <person name="Poliakov E."/>
            <person name="Qian H."/>
            <person name="Liu P."/>
            <person name="Dong L."/>
            <person name="Rogozin I.B."/>
            <person name="Redmond T.M."/>
        </authorList>
    </citation>
    <scope>MUTAGENESIS OF ASP-477</scope>
</reference>
<dbReference type="EC" id="3.1.1.64" evidence="4 5"/>
<dbReference type="EC" id="5.3.3.22" evidence="2"/>
<dbReference type="EMBL" id="AF084537">
    <property type="protein sequence ID" value="AAC72356.1"/>
    <property type="molecule type" value="mRNA"/>
</dbReference>
<dbReference type="EMBL" id="Y16567">
    <property type="protein sequence ID" value="CAA76290.1"/>
    <property type="molecule type" value="mRNA"/>
</dbReference>
<dbReference type="EMBL" id="AJ506754">
    <property type="protein sequence ID" value="CAD45010.1"/>
    <property type="molecule type" value="Genomic_DNA"/>
</dbReference>
<dbReference type="EMBL" id="AJ506755">
    <property type="protein sequence ID" value="CAD45010.1"/>
    <property type="status" value="JOINED"/>
    <property type="molecule type" value="Genomic_DNA"/>
</dbReference>
<dbReference type="EMBL" id="AJ506756">
    <property type="protein sequence ID" value="CAD45010.1"/>
    <property type="status" value="JOINED"/>
    <property type="molecule type" value="Genomic_DNA"/>
</dbReference>
<dbReference type="EMBL" id="AJ506757">
    <property type="protein sequence ID" value="CAD45010.1"/>
    <property type="status" value="JOINED"/>
    <property type="molecule type" value="Genomic_DNA"/>
</dbReference>
<dbReference type="EMBL" id="AJ251207">
    <property type="protein sequence ID" value="CAD45010.1"/>
    <property type="status" value="JOINED"/>
    <property type="molecule type" value="Genomic_DNA"/>
</dbReference>
<dbReference type="EMBL" id="AJ506759">
    <property type="protein sequence ID" value="CAD45010.1"/>
    <property type="status" value="JOINED"/>
    <property type="molecule type" value="Genomic_DNA"/>
</dbReference>
<dbReference type="RefSeq" id="NP_001003176.1">
    <property type="nucleotide sequence ID" value="NM_001003176.1"/>
</dbReference>
<dbReference type="SMR" id="Q9TVB8"/>
<dbReference type="FunCoup" id="Q9TVB8">
    <property type="interactions" value="16"/>
</dbReference>
<dbReference type="STRING" id="9615.ENSCAFP00000030301"/>
<dbReference type="PaxDb" id="9612-ENSCAFP00000030301"/>
<dbReference type="GeneID" id="403803"/>
<dbReference type="KEGG" id="cfa:403803"/>
<dbReference type="CTD" id="6121"/>
<dbReference type="eggNOG" id="KOG1285">
    <property type="taxonomic scope" value="Eukaryota"/>
</dbReference>
<dbReference type="InParanoid" id="Q9TVB8"/>
<dbReference type="OrthoDB" id="1069523at2759"/>
<dbReference type="Proteomes" id="UP000002254">
    <property type="component" value="Unplaced"/>
</dbReference>
<dbReference type="Proteomes" id="UP000694429">
    <property type="component" value="Unplaced"/>
</dbReference>
<dbReference type="Proteomes" id="UP000694542">
    <property type="component" value="Unplaced"/>
</dbReference>
<dbReference type="Proteomes" id="UP000805418">
    <property type="component" value="Unplaced"/>
</dbReference>
<dbReference type="GO" id="GO:0005789">
    <property type="term" value="C:endoplasmic reticulum membrane"/>
    <property type="evidence" value="ECO:0000250"/>
    <property type="project" value="UniProtKB"/>
</dbReference>
<dbReference type="GO" id="GO:0016020">
    <property type="term" value="C:membrane"/>
    <property type="evidence" value="ECO:0000250"/>
    <property type="project" value="AgBase"/>
</dbReference>
<dbReference type="GO" id="GO:0005886">
    <property type="term" value="C:plasma membrane"/>
    <property type="evidence" value="ECO:0007669"/>
    <property type="project" value="UniProtKB-SubCell"/>
</dbReference>
<dbReference type="GO" id="GO:0052885">
    <property type="term" value="F:all-trans-retinyl-ester hydrolase, 11-cis retinol forming activity"/>
    <property type="evidence" value="ECO:0000314"/>
    <property type="project" value="UniProtKB"/>
</dbReference>
<dbReference type="GO" id="GO:0052884">
    <property type="term" value="F:all-trans-retinyl-palmitate hydrolase, 11-cis retinol forming activity"/>
    <property type="evidence" value="ECO:0000250"/>
    <property type="project" value="UniProtKB"/>
</dbReference>
<dbReference type="GO" id="GO:0003834">
    <property type="term" value="F:beta-carotene 15,15'-dioxygenase activity"/>
    <property type="evidence" value="ECO:0000318"/>
    <property type="project" value="GO_Central"/>
</dbReference>
<dbReference type="GO" id="GO:1901612">
    <property type="term" value="F:cardiolipin binding"/>
    <property type="evidence" value="ECO:0000250"/>
    <property type="project" value="AgBase"/>
</dbReference>
<dbReference type="GO" id="GO:0016853">
    <property type="term" value="F:isomerase activity"/>
    <property type="evidence" value="ECO:0000250"/>
    <property type="project" value="UniProtKB"/>
</dbReference>
<dbReference type="GO" id="GO:0046872">
    <property type="term" value="F:metal ion binding"/>
    <property type="evidence" value="ECO:0007669"/>
    <property type="project" value="UniProtKB-KW"/>
</dbReference>
<dbReference type="GO" id="GO:0031210">
    <property type="term" value="F:phosphatidylcholine binding"/>
    <property type="evidence" value="ECO:0000250"/>
    <property type="project" value="AgBase"/>
</dbReference>
<dbReference type="GO" id="GO:0001786">
    <property type="term" value="F:phosphatidylserine binding"/>
    <property type="evidence" value="ECO:0000250"/>
    <property type="project" value="AgBase"/>
</dbReference>
<dbReference type="GO" id="GO:0050251">
    <property type="term" value="F:retinol isomerase activity"/>
    <property type="evidence" value="ECO:0000318"/>
    <property type="project" value="GO_Central"/>
</dbReference>
<dbReference type="GO" id="GO:0042574">
    <property type="term" value="P:retinal metabolic process"/>
    <property type="evidence" value="ECO:0000318"/>
    <property type="project" value="GO_Central"/>
</dbReference>
<dbReference type="GO" id="GO:0001523">
    <property type="term" value="P:retinoid metabolic process"/>
    <property type="evidence" value="ECO:0000314"/>
    <property type="project" value="UniProtKB"/>
</dbReference>
<dbReference type="GO" id="GO:0007601">
    <property type="term" value="P:visual perception"/>
    <property type="evidence" value="ECO:0007669"/>
    <property type="project" value="UniProtKB-KW"/>
</dbReference>
<dbReference type="GO" id="GO:1901827">
    <property type="term" value="P:zeaxanthin biosynthetic process"/>
    <property type="evidence" value="ECO:0000250"/>
    <property type="project" value="UniProtKB"/>
</dbReference>
<dbReference type="InterPro" id="IPR004294">
    <property type="entry name" value="Carotenoid_Oase"/>
</dbReference>
<dbReference type="PANTHER" id="PTHR10543">
    <property type="entry name" value="BETA-CAROTENE DIOXYGENASE"/>
    <property type="match status" value="1"/>
</dbReference>
<dbReference type="PANTHER" id="PTHR10543:SF57">
    <property type="entry name" value="RETINOID ISOMEROHYDROLASE"/>
    <property type="match status" value="1"/>
</dbReference>
<dbReference type="Pfam" id="PF03055">
    <property type="entry name" value="RPE65"/>
    <property type="match status" value="1"/>
</dbReference>
<gene>
    <name type="primary">RPE65</name>
</gene>
<organism>
    <name type="scientific">Canis lupus familiaris</name>
    <name type="common">Dog</name>
    <name type="synonym">Canis familiaris</name>
    <dbReference type="NCBI Taxonomy" id="9615"/>
    <lineage>
        <taxon>Eukaryota</taxon>
        <taxon>Metazoa</taxon>
        <taxon>Chordata</taxon>
        <taxon>Craniata</taxon>
        <taxon>Vertebrata</taxon>
        <taxon>Euteleostomi</taxon>
        <taxon>Mammalia</taxon>
        <taxon>Eutheria</taxon>
        <taxon>Laurasiatheria</taxon>
        <taxon>Carnivora</taxon>
        <taxon>Caniformia</taxon>
        <taxon>Canidae</taxon>
        <taxon>Canis</taxon>
    </lineage>
</organism>
<sequence>MSIQVEHPAGGYKKLFETVEELSSPLTAHVTGRIPLWLTGSLLRCGPGLFEVGSEPFYHLFDGQALLHKFDFKEGHVTYHRRFIRTDAYVRAMTEKRIVITEFGTCAFPDPCKNIFSRFFSYFRGVEVTDNALVNVYPVGEDYYACTETNFITKINPETLETIKQVDLCNYVSVNGATAHPHIENDGTVYNIGNCFGKNFSIAYNIVKIPPLQADKEDPISKSEVVVQFPCSDRFKPSYVHSFGLTPNYIVFVETPVKINLLKFLSSWSLWGANYMDCFESNETMGVWLHIADKKRKKYLNNKYRTSSFNLFHHINTYEDNEFLIVDLCCWKGFEFVYNYLYLANLRENWEEVKKNARKAPQPEVRRYVLPLNIDKADTGKNLVTLPNTTATATLRSDETIWLEPEVLFSGPRQAFEFPQINYQKSGGKPYTYAYGLGLNHFVPDRLCKLNVKTKETWVWQEPDSYPSEPIFVSHPDALEEDDGVVLSVVVSPGAGQKPAYLLILNAKDLSEVARAEVEINIPVTFHGLFKKS</sequence>
<name>RPE65_CANLF</name>
<comment type="function">
    <text evidence="2 3">Critical isomerohydrolase in the retinoid cycle involved in regeneration of 11-cis-retinal, the chromophore of rod and cone opsins. Catalyzes the cleavage and isomerization of all-trans-retinyl fatty acid esters to 11-cis-retinol which is further oxidized by 11-cis retinol dehydrogenase to 11-cis-retinal for use as visual chromophore. Essential for the production of 11-cis retinal for both rod and cone photoreceptors. Also capable of catalyzing the isomerization of lutein to meso-zeaxanthin an eye-specific carotenoid. The soluble form binds vitamin A (all-trans-retinol), making it available for LRAT processing to all-trans-retinyl ester. The membrane form, palmitoylated by LRAT, binds all-trans-retinyl esters, making them available for IMH (isomerohydrolase) processing to all-cis-retinol. The soluble form is regenerated by transferring its palmitoyl groups onto 11-cis-retinol, a reaction catalyzed by LRAT.</text>
</comment>
<comment type="catalytic activity">
    <reaction evidence="4 5">
        <text>an all-trans-retinyl ester + H2O = 11-cis-retinol + a fatty acid + H(+)</text>
        <dbReference type="Rhea" id="RHEA:31771"/>
        <dbReference type="ChEBI" id="CHEBI:15377"/>
        <dbReference type="ChEBI" id="CHEBI:15378"/>
        <dbReference type="ChEBI" id="CHEBI:16302"/>
        <dbReference type="ChEBI" id="CHEBI:28868"/>
        <dbReference type="ChEBI" id="CHEBI:63410"/>
        <dbReference type="EC" id="3.1.1.64"/>
    </reaction>
</comment>
<comment type="catalytic activity">
    <reaction evidence="2">
        <text>lutein = (3R,3'S)-zeaxanthin</text>
        <dbReference type="Rhea" id="RHEA:12729"/>
        <dbReference type="ChEBI" id="CHEBI:28838"/>
        <dbReference type="ChEBI" id="CHEBI:138919"/>
        <dbReference type="EC" id="5.3.3.22"/>
    </reaction>
</comment>
<comment type="catalytic activity">
    <reaction evidence="2">
        <text>all-trans-retinyl hexadecanoate + H2O = 11-cis-retinol + hexadecanoate + H(+)</text>
        <dbReference type="Rhea" id="RHEA:31775"/>
        <dbReference type="ChEBI" id="CHEBI:7896"/>
        <dbReference type="ChEBI" id="CHEBI:15377"/>
        <dbReference type="ChEBI" id="CHEBI:15378"/>
        <dbReference type="ChEBI" id="CHEBI:16302"/>
        <dbReference type="ChEBI" id="CHEBI:17616"/>
        <dbReference type="EC" id="3.1.1.64"/>
    </reaction>
</comment>
<comment type="cofactor">
    <cofactor evidence="4">
        <name>Fe(2+)</name>
        <dbReference type="ChEBI" id="CHEBI:29033"/>
    </cofactor>
    <text evidence="4">Binds 1 Fe(2+) ion per subunit.</text>
</comment>
<comment type="subunit">
    <text evidence="2">Interacts with MYO7A; this mediates light-dependent intracellular transport of RPE65.</text>
</comment>
<comment type="subcellular location">
    <subcellularLocation>
        <location evidence="1">Cytoplasm</location>
    </subcellularLocation>
    <subcellularLocation>
        <location evidence="3">Cell membrane</location>
        <topology evidence="3">Lipid-anchor</topology>
    </subcellularLocation>
    <subcellularLocation>
        <location evidence="3">Microsome membrane</location>
    </subcellularLocation>
    <text evidence="2 3">Attached to the membrane by a lipid anchor when palmitoylated (membrane form), soluble when unpalmitoylated. Undergoes light-dependent intracellular transport to become more concentrated in the central region of the retina pigment epithelium cells (By similarity).</text>
</comment>
<comment type="tissue specificity">
    <text>Retinal pigment epithelium specific.</text>
</comment>
<comment type="PTM">
    <text evidence="3">Palmitoylation by LRAT regulates ligand binding specificity; the palmitoylated form (membrane form) specifically binds all-trans-retinyl-palmitate, while the soluble unpalmitoylated form binds all-trans-retinol (vitamin A).</text>
</comment>
<comment type="similarity">
    <text evidence="6">Belongs to the carotenoid oxygenase family.</text>
</comment>
<keyword id="KW-0007">Acetylation</keyword>
<keyword id="KW-1003">Cell membrane</keyword>
<keyword id="KW-0963">Cytoplasm</keyword>
<keyword id="KW-0256">Endoplasmic reticulum</keyword>
<keyword id="KW-0378">Hydrolase</keyword>
<keyword id="KW-0408">Iron</keyword>
<keyword id="KW-0413">Isomerase</keyword>
<keyword id="KW-0443">Lipid metabolism</keyword>
<keyword id="KW-0449">Lipoprotein</keyword>
<keyword id="KW-0472">Membrane</keyword>
<keyword id="KW-0479">Metal-binding</keyword>
<keyword id="KW-0492">Microsome</keyword>
<keyword id="KW-0564">Palmitate</keyword>
<keyword id="KW-0597">Phosphoprotein</keyword>
<keyword id="KW-1185">Reference proteome</keyword>
<keyword id="KW-0716">Sensory transduction</keyword>
<keyword id="KW-0844">Vision</keyword>
<feature type="initiator methionine" description="Removed" evidence="3">
    <location>
        <position position="1"/>
    </location>
</feature>
<feature type="chain" id="PRO_0000143941" description="Retinoid isomerohydrolase">
    <location>
        <begin position="2"/>
        <end position="533"/>
    </location>
</feature>
<feature type="binding site" evidence="4">
    <location>
        <position position="180"/>
    </location>
    <ligand>
        <name>Fe cation</name>
        <dbReference type="ChEBI" id="CHEBI:24875"/>
        <note>catalytic</note>
    </ligand>
</feature>
<feature type="binding site" evidence="4">
    <location>
        <position position="241"/>
    </location>
    <ligand>
        <name>Fe cation</name>
        <dbReference type="ChEBI" id="CHEBI:24875"/>
        <note>catalytic</note>
    </ligand>
</feature>
<feature type="binding site" evidence="4">
    <location>
        <position position="313"/>
    </location>
    <ligand>
        <name>Fe cation</name>
        <dbReference type="ChEBI" id="CHEBI:24875"/>
        <note>catalytic</note>
    </ligand>
</feature>
<feature type="binding site" evidence="4">
    <location>
        <position position="527"/>
    </location>
    <ligand>
        <name>Fe cation</name>
        <dbReference type="ChEBI" id="CHEBI:24875"/>
        <note>catalytic</note>
    </ligand>
</feature>
<feature type="modified residue" description="N-acetylserine" evidence="3">
    <location>
        <position position="2"/>
    </location>
</feature>
<feature type="modified residue" description="Phosphothreonine" evidence="2">
    <location>
        <position position="101"/>
    </location>
</feature>
<feature type="modified residue" description="Phosphothreonine" evidence="2">
    <location>
        <position position="105"/>
    </location>
</feature>
<feature type="modified residue" description="N6-acetyllysine" evidence="2">
    <location>
        <position position="113"/>
    </location>
</feature>
<feature type="modified residue" description="Phosphoserine" evidence="2">
    <location>
        <position position="117"/>
    </location>
</feature>
<feature type="lipid moiety-binding region" description="S-palmitoyl cysteine; in membrane form" evidence="3">
    <location>
        <position position="112"/>
    </location>
</feature>
<feature type="lipid moiety-binding region" description="S-palmitoyl cysteine; in membrane form" evidence="3">
    <location>
        <position position="231"/>
    </location>
</feature>
<feature type="lipid moiety-binding region" description="S-palmitoyl cysteine; in membrane form" evidence="3">
    <location>
        <position position="329"/>
    </location>
</feature>
<feature type="lipid moiety-binding region" description="S-palmitoyl cysteine; in membrane form" evidence="3">
    <location>
        <position position="330"/>
    </location>
</feature>
<feature type="mutagenesis site" description="Loss of enzymatic activity." evidence="4">
    <original>H</original>
    <variation>A</variation>
    <location>
        <position position="180"/>
    </location>
</feature>
<feature type="mutagenesis site" description="Does not affect isomerization activity." evidence="4">
    <original>C</original>
    <variation>S</variation>
    <location>
        <position position="231"/>
    </location>
</feature>
<feature type="mutagenesis site" description="Loss of isomerohydrolase activity." evidence="4">
    <original>H</original>
    <variation>A</variation>
    <location>
        <position position="241"/>
    </location>
</feature>
<feature type="mutagenesis site" description="Loss of isomerohydrolase activity." evidence="4">
    <original>H</original>
    <variation>A</variation>
    <location>
        <position position="313"/>
    </location>
</feature>
<feature type="mutagenesis site" description="Decreasing protein levels. Loss of isomerohydrolase activity." evidence="4">
    <original>CC</original>
    <variation>SS</variation>
    <location>
        <begin position="329"/>
        <end position="330"/>
    </location>
</feature>
<feature type="mutagenesis site" description="Decreasing protein levels. isomerohydrolase activity." evidence="4">
    <original>C</original>
    <variation>S</variation>
    <location>
        <position position="329"/>
    </location>
</feature>
<feature type="mutagenesis site" description="Does not affect isomerohydrolase activity." evidence="4">
    <original>C</original>
    <variation>T</variation>
    <location>
        <position position="330"/>
    </location>
</feature>
<feature type="mutagenesis site" description="Loss of enzymatic isomerohydrolase." evidence="4">
    <original>E</original>
    <variation>A</variation>
    <location>
        <position position="417"/>
    </location>
</feature>
<feature type="mutagenesis site" description="Does not affect isomerohydrolase activity." evidence="5">
    <original>D</original>
    <variation>G</variation>
    <variation>E</variation>
    <variation>N</variation>
    <location>
        <position position="477"/>
    </location>
</feature>
<feature type="mutagenesis site" description="Loss of isomerohydrolase activity." evidence="4">
    <original>H</original>
    <variation>A</variation>
    <location>
        <position position="527"/>
    </location>
</feature>
<feature type="sequence conflict" description="In Ref. 1; AAC72356." evidence="6" ref="1">
    <original>Y</original>
    <variation>S</variation>
    <location>
        <position position="368"/>
    </location>
</feature>
<feature type="sequence conflict" description="In Ref. 1; AAC72356." evidence="6" ref="1">
    <original>S</original>
    <variation>Y</variation>
    <location>
        <position position="426"/>
    </location>
</feature>
<proteinExistence type="evidence at protein level"/>
<protein>
    <recommendedName>
        <fullName>Retinoid isomerohydrolase</fullName>
        <ecNumber evidence="4 5">3.1.1.64</ecNumber>
    </recommendedName>
    <alternativeName>
        <fullName>All-trans-retinyl-palmitate hydrolase</fullName>
    </alternativeName>
    <alternativeName>
        <fullName>Lutein isomerase</fullName>
    </alternativeName>
    <alternativeName>
        <fullName>Meso-zeaxanthin isomerase</fullName>
        <ecNumber evidence="2">5.3.3.22</ecNumber>
    </alternativeName>
    <alternativeName>
        <fullName>Retinal pigment epithelium-specific 65 kDa protein</fullName>
    </alternativeName>
    <alternativeName>
        <fullName>Retinol isomerase</fullName>
    </alternativeName>
</protein>
<accession>Q9TVB8</accession>
<accession>O97623</accession>
<accession>Q8MJY9</accession>
<evidence type="ECO:0000250" key="1">
    <source>
        <dbReference type="UniProtKB" id="A9C3R9"/>
    </source>
</evidence>
<evidence type="ECO:0000250" key="2">
    <source>
        <dbReference type="UniProtKB" id="Q16518"/>
    </source>
</evidence>
<evidence type="ECO:0000250" key="3">
    <source>
        <dbReference type="UniProtKB" id="Q28175"/>
    </source>
</evidence>
<evidence type="ECO:0000269" key="4">
    <source>
    </source>
</evidence>
<evidence type="ECO:0000269" key="5">
    <source>
    </source>
</evidence>
<evidence type="ECO:0000305" key="6"/>